<evidence type="ECO:0000269" key="1">
    <source>
    </source>
</evidence>
<evidence type="ECO:0000269" key="2">
    <source>
    </source>
</evidence>
<evidence type="ECO:0000269" key="3">
    <source>
    </source>
</evidence>
<evidence type="ECO:0000269" key="4">
    <source>
    </source>
</evidence>
<evidence type="ECO:0000269" key="5">
    <source>
    </source>
</evidence>
<evidence type="ECO:0000305" key="6"/>
<feature type="chain" id="PRO_0000212515" description="COMPASS component SHG1">
    <location>
        <begin position="1"/>
        <end position="142"/>
    </location>
</feature>
<gene>
    <name type="primary">SHG1</name>
    <name type="synonym">CPS15</name>
    <name type="ordered locus">YBR258C</name>
    <name type="ORF">YBR1726</name>
</gene>
<organism>
    <name type="scientific">Saccharomyces cerevisiae (strain ATCC 204508 / S288c)</name>
    <name type="common">Baker's yeast</name>
    <dbReference type="NCBI Taxonomy" id="559292"/>
    <lineage>
        <taxon>Eukaryota</taxon>
        <taxon>Fungi</taxon>
        <taxon>Dikarya</taxon>
        <taxon>Ascomycota</taxon>
        <taxon>Saccharomycotina</taxon>
        <taxon>Saccharomycetes</taxon>
        <taxon>Saccharomycetales</taxon>
        <taxon>Saccharomycetaceae</taxon>
        <taxon>Saccharomyces</taxon>
    </lineage>
</organism>
<accession>P38337</accession>
<accession>D6VQQ5</accession>
<sequence length="142" mass="16429">MAYNQEDSKRLSDKYKKEGHFDKLKREILSNPWNNTEENSESFEQALRKRVASTVKEMVNEDEELIFKNRGLTSALIESQLVKDNYLKLGSKMEGDNGDGEKKFDLDVYVRSKLQDPKLLEMIKGQLQETLNSYEEEANGST</sequence>
<dbReference type="EMBL" id="X70529">
    <property type="protein sequence ID" value="CAA49922.1"/>
    <property type="molecule type" value="Genomic_DNA"/>
</dbReference>
<dbReference type="EMBL" id="Z36127">
    <property type="protein sequence ID" value="CAA85221.1"/>
    <property type="molecule type" value="Genomic_DNA"/>
</dbReference>
<dbReference type="EMBL" id="AY557639">
    <property type="protein sequence ID" value="AAS55965.1"/>
    <property type="molecule type" value="Genomic_DNA"/>
</dbReference>
<dbReference type="EMBL" id="BK006936">
    <property type="protein sequence ID" value="DAA07375.1"/>
    <property type="molecule type" value="Genomic_DNA"/>
</dbReference>
<dbReference type="PIR" id="S32960">
    <property type="entry name" value="S32960"/>
</dbReference>
<dbReference type="RefSeq" id="NP_009817.3">
    <property type="nucleotide sequence ID" value="NM_001178606.3"/>
</dbReference>
<dbReference type="BioGRID" id="32954">
    <property type="interactions" value="216"/>
</dbReference>
<dbReference type="ComplexPortal" id="CPX-1039">
    <property type="entry name" value="COMPASS complex"/>
</dbReference>
<dbReference type="DIP" id="DIP-6843N"/>
<dbReference type="FunCoup" id="P38337">
    <property type="interactions" value="52"/>
</dbReference>
<dbReference type="IntAct" id="P38337">
    <property type="interactions" value="7"/>
</dbReference>
<dbReference type="MINT" id="P38337"/>
<dbReference type="STRING" id="4932.YBR258C"/>
<dbReference type="iPTMnet" id="P38337"/>
<dbReference type="PaxDb" id="4932-YBR258C"/>
<dbReference type="PeptideAtlas" id="P38337"/>
<dbReference type="EnsemblFungi" id="YBR258C_mRNA">
    <property type="protein sequence ID" value="YBR258C"/>
    <property type="gene ID" value="YBR258C"/>
</dbReference>
<dbReference type="GeneID" id="852561"/>
<dbReference type="KEGG" id="sce:YBR258C"/>
<dbReference type="AGR" id="SGD:S000000462"/>
<dbReference type="SGD" id="S000000462">
    <property type="gene designation" value="SHG1"/>
</dbReference>
<dbReference type="VEuPathDB" id="FungiDB:YBR258C"/>
<dbReference type="eggNOG" id="ENOG502S9A4">
    <property type="taxonomic scope" value="Eukaryota"/>
</dbReference>
<dbReference type="HOGENOM" id="CLU_139264_0_0_1"/>
<dbReference type="InParanoid" id="P38337"/>
<dbReference type="OMA" id="WNKDEST"/>
<dbReference type="OrthoDB" id="5579731at2759"/>
<dbReference type="BioCyc" id="YEAST:G3O-29182-MONOMER"/>
<dbReference type="BioGRID-ORCS" id="852561">
    <property type="hits" value="0 hits in 10 CRISPR screens"/>
</dbReference>
<dbReference type="PRO" id="PR:P38337"/>
<dbReference type="Proteomes" id="UP000002311">
    <property type="component" value="Chromosome II"/>
</dbReference>
<dbReference type="RNAct" id="P38337">
    <property type="molecule type" value="protein"/>
</dbReference>
<dbReference type="GO" id="GO:0000781">
    <property type="term" value="C:chromosome, telomeric region"/>
    <property type="evidence" value="ECO:0007669"/>
    <property type="project" value="GOC"/>
</dbReference>
<dbReference type="GO" id="GO:0005634">
    <property type="term" value="C:nucleus"/>
    <property type="evidence" value="ECO:0007005"/>
    <property type="project" value="SGD"/>
</dbReference>
<dbReference type="GO" id="GO:0048188">
    <property type="term" value="C:Set1C/COMPASS complex"/>
    <property type="evidence" value="ECO:0000314"/>
    <property type="project" value="UniProtKB"/>
</dbReference>
<dbReference type="GO" id="GO:0006338">
    <property type="term" value="P:chromatin remodeling"/>
    <property type="evidence" value="ECO:0000314"/>
    <property type="project" value="SGD"/>
</dbReference>
<dbReference type="GO" id="GO:0031509">
    <property type="term" value="P:subtelomeric heterochromatin formation"/>
    <property type="evidence" value="ECO:0000303"/>
    <property type="project" value="ComplexPortal"/>
</dbReference>
<dbReference type="InterPro" id="IPR055264">
    <property type="entry name" value="BOD1/SHG1_dom"/>
</dbReference>
<dbReference type="Pfam" id="PF05205">
    <property type="entry name" value="COMPASS-Shg1"/>
    <property type="match status" value="1"/>
</dbReference>
<reference key="1">
    <citation type="journal article" date="1993" name="Yeast">
        <title>The complete sequence of a 19,482 bp segment located on the right arm of chromosome II from Saccharomyces cerevisiae.</title>
        <authorList>
            <person name="Doignon F."/>
            <person name="Biteau N."/>
            <person name="Crouzet M."/>
            <person name="Aigle M."/>
        </authorList>
    </citation>
    <scope>NUCLEOTIDE SEQUENCE [GENOMIC DNA]</scope>
    <source>
        <strain>ATCC 204508 / S288c</strain>
    </source>
</reference>
<reference key="2">
    <citation type="journal article" date="1994" name="EMBO J.">
        <title>Complete DNA sequence of yeast chromosome II.</title>
        <authorList>
            <person name="Feldmann H."/>
            <person name="Aigle M."/>
            <person name="Aljinovic G."/>
            <person name="Andre B."/>
            <person name="Baclet M.C."/>
            <person name="Barthe C."/>
            <person name="Baur A."/>
            <person name="Becam A.-M."/>
            <person name="Biteau N."/>
            <person name="Boles E."/>
            <person name="Brandt T."/>
            <person name="Brendel M."/>
            <person name="Brueckner M."/>
            <person name="Bussereau F."/>
            <person name="Christiansen C."/>
            <person name="Contreras R."/>
            <person name="Crouzet M."/>
            <person name="Cziepluch C."/>
            <person name="Demolis N."/>
            <person name="Delaveau T."/>
            <person name="Doignon F."/>
            <person name="Domdey H."/>
            <person name="Duesterhus S."/>
            <person name="Dubois E."/>
            <person name="Dujon B."/>
            <person name="El Bakkoury M."/>
            <person name="Entian K.-D."/>
            <person name="Feuermann M."/>
            <person name="Fiers W."/>
            <person name="Fobo G.M."/>
            <person name="Fritz C."/>
            <person name="Gassenhuber J."/>
            <person name="Glansdorff N."/>
            <person name="Goffeau A."/>
            <person name="Grivell L.A."/>
            <person name="de Haan M."/>
            <person name="Hein C."/>
            <person name="Herbert C.J."/>
            <person name="Hollenberg C.P."/>
            <person name="Holmstroem K."/>
            <person name="Jacq C."/>
            <person name="Jacquet M."/>
            <person name="Jauniaux J.-C."/>
            <person name="Jonniaux J.-L."/>
            <person name="Kallesoee T."/>
            <person name="Kiesau P."/>
            <person name="Kirchrath L."/>
            <person name="Koetter P."/>
            <person name="Korol S."/>
            <person name="Liebl S."/>
            <person name="Logghe M."/>
            <person name="Lohan A.J.E."/>
            <person name="Louis E.J."/>
            <person name="Li Z.Y."/>
            <person name="Maat M.J."/>
            <person name="Mallet L."/>
            <person name="Mannhaupt G."/>
            <person name="Messenguy F."/>
            <person name="Miosga T."/>
            <person name="Molemans F."/>
            <person name="Mueller S."/>
            <person name="Nasr F."/>
            <person name="Obermaier B."/>
            <person name="Perea J."/>
            <person name="Pierard A."/>
            <person name="Piravandi E."/>
            <person name="Pohl F.M."/>
            <person name="Pohl T.M."/>
            <person name="Potier S."/>
            <person name="Proft M."/>
            <person name="Purnelle B."/>
            <person name="Ramezani Rad M."/>
            <person name="Rieger M."/>
            <person name="Rose M."/>
            <person name="Schaaff-Gerstenschlaeger I."/>
            <person name="Scherens B."/>
            <person name="Schwarzlose C."/>
            <person name="Skala J."/>
            <person name="Slonimski P.P."/>
            <person name="Smits P.H.M."/>
            <person name="Souciet J.-L."/>
            <person name="Steensma H.Y."/>
            <person name="Stucka R."/>
            <person name="Urrestarazu L.A."/>
            <person name="van der Aart Q.J.M."/>
            <person name="Van Dyck L."/>
            <person name="Vassarotti A."/>
            <person name="Vetter I."/>
            <person name="Vierendeels F."/>
            <person name="Vissers S."/>
            <person name="Wagner G."/>
            <person name="de Wergifosse P."/>
            <person name="Wolfe K.H."/>
            <person name="Zagulski M."/>
            <person name="Zimmermann F.K."/>
            <person name="Mewes H.-W."/>
            <person name="Kleine K."/>
        </authorList>
    </citation>
    <scope>NUCLEOTIDE SEQUENCE [LARGE SCALE GENOMIC DNA]</scope>
    <source>
        <strain>ATCC 204508 / S288c</strain>
    </source>
</reference>
<reference key="3">
    <citation type="journal article" date="2014" name="G3 (Bethesda)">
        <title>The reference genome sequence of Saccharomyces cerevisiae: Then and now.</title>
        <authorList>
            <person name="Engel S.R."/>
            <person name="Dietrich F.S."/>
            <person name="Fisk D.G."/>
            <person name="Binkley G."/>
            <person name="Balakrishnan R."/>
            <person name="Costanzo M.C."/>
            <person name="Dwight S.S."/>
            <person name="Hitz B.C."/>
            <person name="Karra K."/>
            <person name="Nash R.S."/>
            <person name="Weng S."/>
            <person name="Wong E.D."/>
            <person name="Lloyd P."/>
            <person name="Skrzypek M.S."/>
            <person name="Miyasato S.R."/>
            <person name="Simison M."/>
            <person name="Cherry J.M."/>
        </authorList>
    </citation>
    <scope>GENOME REANNOTATION</scope>
    <source>
        <strain>ATCC 204508 / S288c</strain>
    </source>
</reference>
<reference key="4">
    <citation type="journal article" date="2007" name="Genome Res.">
        <title>Approaching a complete repository of sequence-verified protein-encoding clones for Saccharomyces cerevisiae.</title>
        <authorList>
            <person name="Hu Y."/>
            <person name="Rolfs A."/>
            <person name="Bhullar B."/>
            <person name="Murthy T.V.S."/>
            <person name="Zhu C."/>
            <person name="Berger M.F."/>
            <person name="Camargo A.A."/>
            <person name="Kelley F."/>
            <person name="McCarron S."/>
            <person name="Jepson D."/>
            <person name="Richardson A."/>
            <person name="Raphael J."/>
            <person name="Moreira D."/>
            <person name="Taycher E."/>
            <person name="Zuo D."/>
            <person name="Mohr S."/>
            <person name="Kane M.F."/>
            <person name="Williamson J."/>
            <person name="Simpson A.J.G."/>
            <person name="Bulyk M.L."/>
            <person name="Harlow E."/>
            <person name="Marsischky G."/>
            <person name="Kolodner R.D."/>
            <person name="LaBaer J."/>
        </authorList>
    </citation>
    <scope>NUCLEOTIDE SEQUENCE [GENOMIC DNA]</scope>
    <source>
        <strain>ATCC 204508 / S288c</strain>
    </source>
</reference>
<reference key="5">
    <citation type="journal article" date="2001" name="EMBO J.">
        <title>The Saccharomyces cerevisiae Set1 complex includes an Ash2 homologue and methylates histone 3 lysine 4.</title>
        <authorList>
            <person name="Roguev A."/>
            <person name="Schaft D."/>
            <person name="Shevchenko A."/>
            <person name="Pijnappel W.W.M.P."/>
            <person name="Wilm M."/>
            <person name="Aasland R."/>
            <person name="Stewart A.F."/>
        </authorList>
    </citation>
    <scope>FUNCTION</scope>
    <scope>SUBUNIT</scope>
</reference>
<reference key="6">
    <citation type="journal article" date="2002" name="J. Biol. Chem.">
        <title>COMPASS, a histone H3 (Lysine 4) methyltransferase required for telomeric silencing of gene expression.</title>
        <authorList>
            <person name="Krogan N.J."/>
            <person name="Dover J."/>
            <person name="Khorrami S."/>
            <person name="Greenblatt J.F."/>
            <person name="Schneider J."/>
            <person name="Johnston M."/>
            <person name="Shilatifard A."/>
        </authorList>
    </citation>
    <scope>FUNCTION</scope>
</reference>
<reference key="7">
    <citation type="journal article" date="2001" name="Proc. Natl. Acad. Sci. U.S.A.">
        <title>COMPASS: a complex of proteins associated with a trithorax-related SET domain protein.</title>
        <authorList>
            <person name="Miller T."/>
            <person name="Krogan N.J."/>
            <person name="Dover J."/>
            <person name="Erdjument-Bromage H."/>
            <person name="Tempst P."/>
            <person name="Johnston M."/>
            <person name="Greenblatt J.F."/>
            <person name="Shilatifard A."/>
        </authorList>
    </citation>
    <scope>SUBUNIT</scope>
</reference>
<reference key="8">
    <citation type="journal article" date="2003" name="Nature">
        <title>Global analysis of protein expression in yeast.</title>
        <authorList>
            <person name="Ghaemmaghami S."/>
            <person name="Huh W.-K."/>
            <person name="Bower K."/>
            <person name="Howson R.W."/>
            <person name="Belle A."/>
            <person name="Dephoure N."/>
            <person name="O'Shea E.K."/>
            <person name="Weissman J.S."/>
        </authorList>
    </citation>
    <scope>LEVEL OF PROTEIN EXPRESSION [LARGE SCALE ANALYSIS]</scope>
</reference>
<reference key="9">
    <citation type="journal article" date="2012" name="Proc. Natl. Acad. Sci. U.S.A.">
        <title>N-terminal acetylome analyses and functional insights of the N-terminal acetyltransferase NatB.</title>
        <authorList>
            <person name="Van Damme P."/>
            <person name="Lasa M."/>
            <person name="Polevoda B."/>
            <person name="Gazquez C."/>
            <person name="Elosegui-Artola A."/>
            <person name="Kim D.S."/>
            <person name="De Juan-Pardo E."/>
            <person name="Demeyer K."/>
            <person name="Hole K."/>
            <person name="Larrea E."/>
            <person name="Timmerman E."/>
            <person name="Prieto J."/>
            <person name="Arnesen T."/>
            <person name="Sherman F."/>
            <person name="Gevaert K."/>
            <person name="Aldabe R."/>
        </authorList>
    </citation>
    <scope>IDENTIFICATION BY MASS SPECTROMETRY [LARGE SCALE ANALYSIS]</scope>
</reference>
<reference key="10">
    <citation type="journal article" date="2017" name="Cell Discov.">
        <title>Binding to RNA regulates Set1 function.</title>
        <authorList>
            <person name="Luciano P."/>
            <person name="Jeon J."/>
            <person name="El-Kaoutari A."/>
            <person name="Challal D."/>
            <person name="Bonnet A."/>
            <person name="Barucco M."/>
            <person name="Candelli T."/>
            <person name="Jourquin F."/>
            <person name="Lesage P."/>
            <person name="Kim J."/>
            <person name="Libri D."/>
            <person name="Geli V."/>
        </authorList>
    </citation>
    <scope>IDENTIFICATION IN THE SET1C/COMPASS COMPLEX</scope>
</reference>
<proteinExistence type="evidence at protein level"/>
<name>SHG1_YEAST</name>
<comment type="function">
    <text evidence="2 3">The COMPASS (Set1C) complex specifically mono-, di- and trimethylates histone H3 to form H3K4me1/2/3, which subsequently plays a role in telomere length maintenance and transcription elongation regulation.</text>
</comment>
<comment type="subunit">
    <text evidence="1 2 5">Component of the Set1C/COMPASS complex which consists of SET1(2), BRE2(2), SPP1(2), SDC1(1), SHG1(1), SWD1(1), SWD2(1), and SWD3(1).</text>
</comment>
<comment type="interaction">
    <interactant intactId="EBI-21106">
        <id>P38337</id>
    </interactant>
    <interactant intactId="EBI-16977">
        <id>P38827</id>
        <label>SET1</label>
    </interactant>
    <organismsDiffer>false</organismsDiffer>
    <experiments>6</experiments>
</comment>
<comment type="subcellular location">
    <subcellularLocation>
        <location evidence="6">Nucleus</location>
    </subcellularLocation>
</comment>
<comment type="miscellaneous">
    <text evidence="4">Present with 1520 molecules/cell in log phase SD medium.</text>
</comment>
<comment type="similarity">
    <text evidence="6">Belongs to the SHG1 family.</text>
</comment>
<protein>
    <recommendedName>
        <fullName>COMPASS component SHG1</fullName>
    </recommendedName>
    <alternativeName>
        <fullName>Complex proteins associated with SET1 protein SHG1</fullName>
    </alternativeName>
    <alternativeName>
        <fullName>Set1C component SHG1</fullName>
    </alternativeName>
</protein>
<keyword id="KW-0539">Nucleus</keyword>
<keyword id="KW-1185">Reference proteome</keyword>